<keyword id="KW-0963">Cytoplasm</keyword>
<keyword id="KW-1185">Reference proteome</keyword>
<keyword id="KW-0690">Ribosome biogenesis</keyword>
<protein>
    <recommendedName>
        <fullName evidence="1">Ribosome-binding factor A</fullName>
    </recommendedName>
</protein>
<dbReference type="EMBL" id="AE008691">
    <property type="protein sequence ID" value="AAM24614.1"/>
    <property type="molecule type" value="Genomic_DNA"/>
</dbReference>
<dbReference type="SMR" id="Q8RA38"/>
<dbReference type="STRING" id="273068.TTE1392"/>
<dbReference type="KEGG" id="tte:TTE1392"/>
<dbReference type="eggNOG" id="COG0858">
    <property type="taxonomic scope" value="Bacteria"/>
</dbReference>
<dbReference type="HOGENOM" id="CLU_089475_6_3_9"/>
<dbReference type="Proteomes" id="UP000000555">
    <property type="component" value="Chromosome"/>
</dbReference>
<dbReference type="GO" id="GO:0005829">
    <property type="term" value="C:cytosol"/>
    <property type="evidence" value="ECO:0007669"/>
    <property type="project" value="TreeGrafter"/>
</dbReference>
<dbReference type="GO" id="GO:0043024">
    <property type="term" value="F:ribosomal small subunit binding"/>
    <property type="evidence" value="ECO:0007669"/>
    <property type="project" value="TreeGrafter"/>
</dbReference>
<dbReference type="GO" id="GO:0030490">
    <property type="term" value="P:maturation of SSU-rRNA"/>
    <property type="evidence" value="ECO:0007669"/>
    <property type="project" value="UniProtKB-UniRule"/>
</dbReference>
<dbReference type="Gene3D" id="3.30.300.20">
    <property type="match status" value="1"/>
</dbReference>
<dbReference type="HAMAP" id="MF_00003">
    <property type="entry name" value="RbfA"/>
    <property type="match status" value="1"/>
</dbReference>
<dbReference type="InterPro" id="IPR015946">
    <property type="entry name" value="KH_dom-like_a/b"/>
</dbReference>
<dbReference type="InterPro" id="IPR000238">
    <property type="entry name" value="RbfA"/>
</dbReference>
<dbReference type="InterPro" id="IPR023799">
    <property type="entry name" value="RbfA_dom_sf"/>
</dbReference>
<dbReference type="InterPro" id="IPR020053">
    <property type="entry name" value="Ribosome-bd_factorA_CS"/>
</dbReference>
<dbReference type="NCBIfam" id="TIGR00082">
    <property type="entry name" value="rbfA"/>
    <property type="match status" value="1"/>
</dbReference>
<dbReference type="PANTHER" id="PTHR33515">
    <property type="entry name" value="RIBOSOME-BINDING FACTOR A, CHLOROPLASTIC-RELATED"/>
    <property type="match status" value="1"/>
</dbReference>
<dbReference type="PANTHER" id="PTHR33515:SF1">
    <property type="entry name" value="RIBOSOME-BINDING FACTOR A, CHLOROPLASTIC-RELATED"/>
    <property type="match status" value="1"/>
</dbReference>
<dbReference type="Pfam" id="PF02033">
    <property type="entry name" value="RBFA"/>
    <property type="match status" value="1"/>
</dbReference>
<dbReference type="SUPFAM" id="SSF89919">
    <property type="entry name" value="Ribosome-binding factor A, RbfA"/>
    <property type="match status" value="1"/>
</dbReference>
<dbReference type="PROSITE" id="PS01319">
    <property type="entry name" value="RBFA"/>
    <property type="match status" value="1"/>
</dbReference>
<reference key="1">
    <citation type="journal article" date="2002" name="Genome Res.">
        <title>A complete sequence of the T. tengcongensis genome.</title>
        <authorList>
            <person name="Bao Q."/>
            <person name="Tian Y."/>
            <person name="Li W."/>
            <person name="Xu Z."/>
            <person name="Xuan Z."/>
            <person name="Hu S."/>
            <person name="Dong W."/>
            <person name="Yang J."/>
            <person name="Chen Y."/>
            <person name="Xue Y."/>
            <person name="Xu Y."/>
            <person name="Lai X."/>
            <person name="Huang L."/>
            <person name="Dong X."/>
            <person name="Ma Y."/>
            <person name="Ling L."/>
            <person name="Tan H."/>
            <person name="Chen R."/>
            <person name="Wang J."/>
            <person name="Yu J."/>
            <person name="Yang H."/>
        </authorList>
    </citation>
    <scope>NUCLEOTIDE SEQUENCE [LARGE SCALE GENOMIC DNA]</scope>
    <source>
        <strain>DSM 15242 / JCM 11007 / NBRC 100824 / MB4</strain>
    </source>
</reference>
<proteinExistence type="inferred from homology"/>
<organism>
    <name type="scientific">Caldanaerobacter subterraneus subsp. tengcongensis (strain DSM 15242 / JCM 11007 / NBRC 100824 / MB4)</name>
    <name type="common">Thermoanaerobacter tengcongensis</name>
    <dbReference type="NCBI Taxonomy" id="273068"/>
    <lineage>
        <taxon>Bacteria</taxon>
        <taxon>Bacillati</taxon>
        <taxon>Bacillota</taxon>
        <taxon>Clostridia</taxon>
        <taxon>Thermoanaerobacterales</taxon>
        <taxon>Thermoanaerobacteraceae</taxon>
        <taxon>Caldanaerobacter</taxon>
    </lineage>
</organism>
<comment type="function">
    <text evidence="1">One of several proteins that assist in the late maturation steps of the functional core of the 30S ribosomal subunit. Associates with free 30S ribosomal subunits (but not with 30S subunits that are part of 70S ribosomes or polysomes). Required for efficient processing of 16S rRNA. May interact with the 5'-terminal helix region of 16S rRNA.</text>
</comment>
<comment type="subunit">
    <text evidence="1">Monomer. Binds 30S ribosomal subunits, but not 50S ribosomal subunits or 70S ribosomes.</text>
</comment>
<comment type="subcellular location">
    <subcellularLocation>
        <location evidence="1">Cytoplasm</location>
    </subcellularLocation>
</comment>
<comment type="similarity">
    <text evidence="1">Belongs to the RbfA family.</text>
</comment>
<feature type="chain" id="PRO_0000102759" description="Ribosome-binding factor A">
    <location>
        <begin position="1"/>
        <end position="122"/>
    </location>
</feature>
<accession>Q8RA38</accession>
<gene>
    <name evidence="1" type="primary">rbfA</name>
    <name type="ordered locus">TTE1392</name>
</gene>
<sequence>MRKMQYRSHRLSEELKKEISKMILEEIKDPRIKAMVSITDIEVTKDLRYAKVYVSIYGSEEEKRETFEGLKSAAGYIRHEIGRRIKMRYTPEIIFELDHSIEYGAKISEILKELNKQEGDDN</sequence>
<name>RBFA_CALS4</name>
<evidence type="ECO:0000255" key="1">
    <source>
        <dbReference type="HAMAP-Rule" id="MF_00003"/>
    </source>
</evidence>